<dbReference type="EC" id="2.8.2.-"/>
<dbReference type="EMBL" id="AAFI02000003">
    <property type="protein sequence ID" value="EAL73268.1"/>
    <property type="molecule type" value="Genomic_DNA"/>
</dbReference>
<dbReference type="RefSeq" id="XP_647176.1">
    <property type="nucleotide sequence ID" value="XM_642084.1"/>
</dbReference>
<dbReference type="SMR" id="Q55GK8"/>
<dbReference type="FunCoup" id="Q55GK8">
    <property type="interactions" value="17"/>
</dbReference>
<dbReference type="STRING" id="44689.Q55GK8"/>
<dbReference type="GlyCosmos" id="Q55GK8">
    <property type="glycosylation" value="3 sites, No reported glycans"/>
</dbReference>
<dbReference type="GlyGen" id="Q55GK8">
    <property type="glycosylation" value="3 sites"/>
</dbReference>
<dbReference type="PaxDb" id="44689-DDB0233104"/>
<dbReference type="ABCD" id="Q55GK8">
    <property type="antibodies" value="12 sequenced antibodies"/>
</dbReference>
<dbReference type="EnsemblProtists" id="EAL73268">
    <property type="protein sequence ID" value="EAL73268"/>
    <property type="gene ID" value="DDB_G0267630"/>
</dbReference>
<dbReference type="GeneID" id="8615979"/>
<dbReference type="KEGG" id="ddi:DDB_G0267630"/>
<dbReference type="dictyBase" id="DDB_G0267630">
    <property type="gene designation" value="kil1"/>
</dbReference>
<dbReference type="VEuPathDB" id="AmoebaDB:DDB_G0267630"/>
<dbReference type="eggNOG" id="KOG3704">
    <property type="taxonomic scope" value="Eukaryota"/>
</dbReference>
<dbReference type="HOGENOM" id="CLU_580655_0_0_1"/>
<dbReference type="InParanoid" id="Q55GK8"/>
<dbReference type="OMA" id="GHPTFGM"/>
<dbReference type="PhylomeDB" id="Q55GK8"/>
<dbReference type="PRO" id="PR:Q55GK8"/>
<dbReference type="Proteomes" id="UP000002195">
    <property type="component" value="Chromosome 1"/>
</dbReference>
<dbReference type="GO" id="GO:0005794">
    <property type="term" value="C:Golgi apparatus"/>
    <property type="evidence" value="ECO:0000304"/>
    <property type="project" value="dictyBase"/>
</dbReference>
<dbReference type="GO" id="GO:0016020">
    <property type="term" value="C:membrane"/>
    <property type="evidence" value="ECO:0007669"/>
    <property type="project" value="UniProtKB-SubCell"/>
</dbReference>
<dbReference type="GO" id="GO:0008146">
    <property type="term" value="F:sulfotransferase activity"/>
    <property type="evidence" value="ECO:0000314"/>
    <property type="project" value="dictyBase"/>
</dbReference>
<dbReference type="GO" id="GO:0042742">
    <property type="term" value="P:defense response to bacterium"/>
    <property type="evidence" value="ECO:0000315"/>
    <property type="project" value="dictyBase"/>
</dbReference>
<dbReference type="GO" id="GO:0050829">
    <property type="term" value="P:defense response to Gram-negative bacterium"/>
    <property type="evidence" value="ECO:0000315"/>
    <property type="project" value="dictyBase"/>
</dbReference>
<dbReference type="GO" id="GO:0140460">
    <property type="term" value="P:response to Gram-negative bacterium"/>
    <property type="evidence" value="ECO:0007005"/>
    <property type="project" value="dictyBase"/>
</dbReference>
<dbReference type="GO" id="GO:0001878">
    <property type="term" value="P:response to yeast"/>
    <property type="evidence" value="ECO:0000315"/>
    <property type="project" value="dictyBase"/>
</dbReference>
<dbReference type="Gene3D" id="3.40.50.300">
    <property type="entry name" value="P-loop containing nucleotide triphosphate hydrolases"/>
    <property type="match status" value="1"/>
</dbReference>
<dbReference type="InterPro" id="IPR037359">
    <property type="entry name" value="NST/OST"/>
</dbReference>
<dbReference type="InterPro" id="IPR027417">
    <property type="entry name" value="P-loop_NTPase"/>
</dbReference>
<dbReference type="InterPro" id="IPR000863">
    <property type="entry name" value="Sulfotransferase_dom"/>
</dbReference>
<dbReference type="PANTHER" id="PTHR10605:SF56">
    <property type="entry name" value="BIFUNCTIONAL HEPARAN SULFATE N-DEACETYLASE_N-SULFOTRANSFERASE"/>
    <property type="match status" value="1"/>
</dbReference>
<dbReference type="PANTHER" id="PTHR10605">
    <property type="entry name" value="HEPARAN SULFATE SULFOTRANSFERASE"/>
    <property type="match status" value="1"/>
</dbReference>
<dbReference type="Pfam" id="PF00685">
    <property type="entry name" value="Sulfotransfer_1"/>
    <property type="match status" value="2"/>
</dbReference>
<dbReference type="SUPFAM" id="SSF52540">
    <property type="entry name" value="P-loop containing nucleoside triphosphate hydrolases"/>
    <property type="match status" value="1"/>
</dbReference>
<protein>
    <recommendedName>
        <fullName>Membrane-associated sulfotransferase kil1</fullName>
        <ecNumber>2.8.2.-</ecNumber>
    </recommendedName>
</protein>
<name>KIL1_DICDI</name>
<feature type="chain" id="PRO_0000327865" description="Membrane-associated sulfotransferase kil1">
    <location>
        <begin position="1"/>
        <end position="471"/>
    </location>
</feature>
<feature type="topological domain" description="Cytoplasmic" evidence="2">
    <location>
        <begin position="1"/>
        <end position="12"/>
    </location>
</feature>
<feature type="transmembrane region" description="Helical; Signal-anchor for type II membrane protein" evidence="2">
    <location>
        <begin position="13"/>
        <end position="33"/>
    </location>
</feature>
<feature type="topological domain" description="Lumenal" evidence="2">
    <location>
        <begin position="34"/>
        <end position="471"/>
    </location>
</feature>
<feature type="region of interest" description="Disordered" evidence="3">
    <location>
        <begin position="89"/>
        <end position="127"/>
    </location>
</feature>
<feature type="compositionally biased region" description="Low complexity" evidence="3">
    <location>
        <begin position="89"/>
        <end position="105"/>
    </location>
</feature>
<feature type="compositionally biased region" description="Low complexity" evidence="3">
    <location>
        <begin position="112"/>
        <end position="127"/>
    </location>
</feature>
<feature type="binding site" evidence="1">
    <location>
        <begin position="167"/>
        <end position="172"/>
    </location>
    <ligand>
        <name>3'-phosphoadenylyl sulfate</name>
        <dbReference type="ChEBI" id="CHEBI:58339"/>
    </ligand>
</feature>
<feature type="binding site" evidence="1">
    <location>
        <position position="252"/>
    </location>
    <ligand>
        <name>3'-phosphoadenylyl sulfate</name>
        <dbReference type="ChEBI" id="CHEBI:58339"/>
    </ligand>
</feature>
<feature type="binding site" evidence="1">
    <location>
        <position position="260"/>
    </location>
    <ligand>
        <name>3'-phosphoadenylyl sulfate</name>
        <dbReference type="ChEBI" id="CHEBI:58339"/>
    </ligand>
</feature>
<feature type="binding site" evidence="1">
    <location>
        <position position="348"/>
    </location>
    <ligand>
        <name>3'-phosphoadenylyl sulfate</name>
        <dbReference type="ChEBI" id="CHEBI:58339"/>
    </ligand>
</feature>
<feature type="glycosylation site" description="N-linked (GlcNAc...) asparagine" evidence="2">
    <location>
        <position position="47"/>
    </location>
</feature>
<feature type="glycosylation site" description="N-linked (GlcNAc...) asparagine" evidence="2">
    <location>
        <position position="324"/>
    </location>
</feature>
<feature type="glycosylation site" description="N-linked (GlcNAc...) asparagine" evidence="2">
    <location>
        <position position="344"/>
    </location>
</feature>
<sequence>MSTTSMILTKKNIIILSIIIITIIAYQFYITSPQSFPSSNTITNTINTSGKGLDYTELLNLQKDLKAQQTEIRKQLEQLKYSINDINQNQNENQNQINNEYNNNKLNDEQENNNNNNYNNNNNNNNNELINYKERIKKKSKEQPNTCIPVEGKLLCLPNFIVIGTMKSGTTFLDYYLQKHPQIAHHSKKEIWYFNSYYANGIEWYAKHFEQYTSLENQKLIGEATPFYINNPNTAPRLFTTLKNAKLILLLRDPVERSLSQYHFSIQWLKRNKSPPLEYSFEHLIHEEADVIETCIRGHERYKEAFKQRKEIEKNGGGGLLNDNTSGEEFNLVDPFYTLHSEKNWTFYKDCIRCDKCFQIGSILHTSGHPTFGMLAKSLYFEQLDYWLNFFPLEQIHIIRYEDISSQPESVLSELEDFLDINHIDYGEFKPRNVVQHDPMNQEIKSYLINYFKQSNEKLYNLLNRDFKWQN</sequence>
<accession>Q55GK8</accession>
<comment type="function">
    <text evidence="4">Sulfotransferase involved in intracellular killing of bacteria.</text>
</comment>
<comment type="subcellular location">
    <subcellularLocation>
        <location evidence="5">Membrane</location>
        <topology evidence="5">Single-pass type II membrane protein</topology>
    </subcellularLocation>
</comment>
<comment type="similarity">
    <text evidence="5">Belongs to the sulfotransferase 1 family.</text>
</comment>
<evidence type="ECO:0000250" key="1"/>
<evidence type="ECO:0000255" key="2"/>
<evidence type="ECO:0000256" key="3">
    <source>
        <dbReference type="SAM" id="MobiDB-lite"/>
    </source>
</evidence>
<evidence type="ECO:0000269" key="4">
    <source>
    </source>
</evidence>
<evidence type="ECO:0000305" key="5"/>
<proteinExistence type="inferred from homology"/>
<organism>
    <name type="scientific">Dictyostelium discoideum</name>
    <name type="common">Social amoeba</name>
    <dbReference type="NCBI Taxonomy" id="44689"/>
    <lineage>
        <taxon>Eukaryota</taxon>
        <taxon>Amoebozoa</taxon>
        <taxon>Evosea</taxon>
        <taxon>Eumycetozoa</taxon>
        <taxon>Dictyostelia</taxon>
        <taxon>Dictyosteliales</taxon>
        <taxon>Dictyosteliaceae</taxon>
        <taxon>Dictyostelium</taxon>
    </lineage>
</organism>
<reference key="1">
    <citation type="journal article" date="2005" name="Nature">
        <title>The genome of the social amoeba Dictyostelium discoideum.</title>
        <authorList>
            <person name="Eichinger L."/>
            <person name="Pachebat J.A."/>
            <person name="Gloeckner G."/>
            <person name="Rajandream M.A."/>
            <person name="Sucgang R."/>
            <person name="Berriman M."/>
            <person name="Song J."/>
            <person name="Olsen R."/>
            <person name="Szafranski K."/>
            <person name="Xu Q."/>
            <person name="Tunggal B."/>
            <person name="Kummerfeld S."/>
            <person name="Madera M."/>
            <person name="Konfortov B.A."/>
            <person name="Rivero F."/>
            <person name="Bankier A.T."/>
            <person name="Lehmann R."/>
            <person name="Hamlin N."/>
            <person name="Davies R."/>
            <person name="Gaudet P."/>
            <person name="Fey P."/>
            <person name="Pilcher K."/>
            <person name="Chen G."/>
            <person name="Saunders D."/>
            <person name="Sodergren E.J."/>
            <person name="Davis P."/>
            <person name="Kerhornou A."/>
            <person name="Nie X."/>
            <person name="Hall N."/>
            <person name="Anjard C."/>
            <person name="Hemphill L."/>
            <person name="Bason N."/>
            <person name="Farbrother P."/>
            <person name="Desany B."/>
            <person name="Just E."/>
            <person name="Morio T."/>
            <person name="Rost R."/>
            <person name="Churcher C.M."/>
            <person name="Cooper J."/>
            <person name="Haydock S."/>
            <person name="van Driessche N."/>
            <person name="Cronin A."/>
            <person name="Goodhead I."/>
            <person name="Muzny D.M."/>
            <person name="Mourier T."/>
            <person name="Pain A."/>
            <person name="Lu M."/>
            <person name="Harper D."/>
            <person name="Lindsay R."/>
            <person name="Hauser H."/>
            <person name="James K.D."/>
            <person name="Quiles M."/>
            <person name="Madan Babu M."/>
            <person name="Saito T."/>
            <person name="Buchrieser C."/>
            <person name="Wardroper A."/>
            <person name="Felder M."/>
            <person name="Thangavelu M."/>
            <person name="Johnson D."/>
            <person name="Knights A."/>
            <person name="Loulseged H."/>
            <person name="Mungall K.L."/>
            <person name="Oliver K."/>
            <person name="Price C."/>
            <person name="Quail M.A."/>
            <person name="Urushihara H."/>
            <person name="Hernandez J."/>
            <person name="Rabbinowitsch E."/>
            <person name="Steffen D."/>
            <person name="Sanders M."/>
            <person name="Ma J."/>
            <person name="Kohara Y."/>
            <person name="Sharp S."/>
            <person name="Simmonds M.N."/>
            <person name="Spiegler S."/>
            <person name="Tivey A."/>
            <person name="Sugano S."/>
            <person name="White B."/>
            <person name="Walker D."/>
            <person name="Woodward J.R."/>
            <person name="Winckler T."/>
            <person name="Tanaka Y."/>
            <person name="Shaulsky G."/>
            <person name="Schleicher M."/>
            <person name="Weinstock G.M."/>
            <person name="Rosenthal A."/>
            <person name="Cox E.C."/>
            <person name="Chisholm R.L."/>
            <person name="Gibbs R.A."/>
            <person name="Loomis W.F."/>
            <person name="Platzer M."/>
            <person name="Kay R.R."/>
            <person name="Williams J.G."/>
            <person name="Dear P.H."/>
            <person name="Noegel A.A."/>
            <person name="Barrell B.G."/>
            <person name="Kuspa A."/>
        </authorList>
    </citation>
    <scope>NUCLEOTIDE SEQUENCE [LARGE SCALE GENOMIC DNA]</scope>
    <source>
        <strain>AX4</strain>
    </source>
</reference>
<reference key="2">
    <citation type="journal article" date="2006" name="Cell. Microbiol.">
        <title>Specific host genes required for the killing of Klebsiella bacteria by phagocytes.</title>
        <authorList>
            <person name="Benghezal M."/>
            <person name="Fauvarque M.O."/>
            <person name="Tournebize R."/>
            <person name="Froquet R."/>
            <person name="Marchetti A."/>
            <person name="Bergeret E."/>
            <person name="Lardy B."/>
            <person name="Klein G."/>
            <person name="Sansonetti P."/>
            <person name="Charette S.J."/>
            <person name="Cosson P."/>
        </authorList>
    </citation>
    <scope>FUNCTION</scope>
</reference>
<gene>
    <name type="primary">kil1</name>
    <name type="ORF">DDB_G0267630</name>
</gene>
<keyword id="KW-0325">Glycoprotein</keyword>
<keyword id="KW-0472">Membrane</keyword>
<keyword id="KW-1185">Reference proteome</keyword>
<keyword id="KW-0735">Signal-anchor</keyword>
<keyword id="KW-0808">Transferase</keyword>
<keyword id="KW-0812">Transmembrane</keyword>
<keyword id="KW-1133">Transmembrane helix</keyword>